<gene>
    <name evidence="1" type="primary">engB</name>
    <name type="ordered locus">VC_0111</name>
</gene>
<name>ENGB_VIBCH</name>
<evidence type="ECO:0000255" key="1">
    <source>
        <dbReference type="HAMAP-Rule" id="MF_00321"/>
    </source>
</evidence>
<reference key="1">
    <citation type="journal article" date="2000" name="Nature">
        <title>DNA sequence of both chromosomes of the cholera pathogen Vibrio cholerae.</title>
        <authorList>
            <person name="Heidelberg J.F."/>
            <person name="Eisen J.A."/>
            <person name="Nelson W.C."/>
            <person name="Clayton R.A."/>
            <person name="Gwinn M.L."/>
            <person name="Dodson R.J."/>
            <person name="Haft D.H."/>
            <person name="Hickey E.K."/>
            <person name="Peterson J.D."/>
            <person name="Umayam L.A."/>
            <person name="Gill S.R."/>
            <person name="Nelson K.E."/>
            <person name="Read T.D."/>
            <person name="Tettelin H."/>
            <person name="Richardson D.L."/>
            <person name="Ermolaeva M.D."/>
            <person name="Vamathevan J.J."/>
            <person name="Bass S."/>
            <person name="Qin H."/>
            <person name="Dragoi I."/>
            <person name="Sellers P."/>
            <person name="McDonald L.A."/>
            <person name="Utterback T.R."/>
            <person name="Fleischmann R.D."/>
            <person name="Nierman W.C."/>
            <person name="White O."/>
            <person name="Salzberg S.L."/>
            <person name="Smith H.O."/>
            <person name="Colwell R.R."/>
            <person name="Mekalanos J.J."/>
            <person name="Venter J.C."/>
            <person name="Fraser C.M."/>
        </authorList>
    </citation>
    <scope>NUCLEOTIDE SEQUENCE [LARGE SCALE GENOMIC DNA]</scope>
    <source>
        <strain>ATCC 39315 / El Tor Inaba N16961</strain>
    </source>
</reference>
<feature type="chain" id="PRO_0000157797" description="Probable GTP-binding protein EngB">
    <location>
        <begin position="1"/>
        <end position="220"/>
    </location>
</feature>
<feature type="domain" description="EngB-type G" evidence="1">
    <location>
        <begin position="26"/>
        <end position="200"/>
    </location>
</feature>
<feature type="binding site" evidence="1">
    <location>
        <begin position="34"/>
        <end position="41"/>
    </location>
    <ligand>
        <name>GTP</name>
        <dbReference type="ChEBI" id="CHEBI:37565"/>
    </ligand>
</feature>
<feature type="binding site" evidence="1">
    <location>
        <position position="41"/>
    </location>
    <ligand>
        <name>Mg(2+)</name>
        <dbReference type="ChEBI" id="CHEBI:18420"/>
    </ligand>
</feature>
<feature type="binding site" evidence="1">
    <location>
        <begin position="61"/>
        <end position="65"/>
    </location>
    <ligand>
        <name>GTP</name>
        <dbReference type="ChEBI" id="CHEBI:37565"/>
    </ligand>
</feature>
<feature type="binding site" evidence="1">
    <location>
        <position position="63"/>
    </location>
    <ligand>
        <name>Mg(2+)</name>
        <dbReference type="ChEBI" id="CHEBI:18420"/>
    </ligand>
</feature>
<feature type="binding site" evidence="1">
    <location>
        <begin position="79"/>
        <end position="82"/>
    </location>
    <ligand>
        <name>GTP</name>
        <dbReference type="ChEBI" id="CHEBI:37565"/>
    </ligand>
</feature>
<feature type="binding site" evidence="1">
    <location>
        <begin position="146"/>
        <end position="149"/>
    </location>
    <ligand>
        <name>GTP</name>
        <dbReference type="ChEBI" id="CHEBI:37565"/>
    </ligand>
</feature>
<feature type="binding site" evidence="1">
    <location>
        <begin position="179"/>
        <end position="181"/>
    </location>
    <ligand>
        <name>GTP</name>
        <dbReference type="ChEBI" id="CHEBI:37565"/>
    </ligand>
</feature>
<comment type="function">
    <text evidence="1">Necessary for normal cell division and for the maintenance of normal septation.</text>
</comment>
<comment type="cofactor">
    <cofactor evidence="1">
        <name>Mg(2+)</name>
        <dbReference type="ChEBI" id="CHEBI:18420"/>
    </cofactor>
</comment>
<comment type="similarity">
    <text evidence="1">Belongs to the TRAFAC class TrmE-Era-EngA-EngB-Septin-like GTPase superfamily. EngB GTPase family.</text>
</comment>
<accession>Q9KVN0</accession>
<protein>
    <recommendedName>
        <fullName evidence="1">Probable GTP-binding protein EngB</fullName>
    </recommendedName>
</protein>
<proteinExistence type="inferred from homology"/>
<dbReference type="EMBL" id="AE003852">
    <property type="protein sequence ID" value="AAF93289.1"/>
    <property type="molecule type" value="Genomic_DNA"/>
</dbReference>
<dbReference type="PIR" id="E82364">
    <property type="entry name" value="E82364"/>
</dbReference>
<dbReference type="RefSeq" id="NP_229770.1">
    <property type="nucleotide sequence ID" value="NC_002505.1"/>
</dbReference>
<dbReference type="SMR" id="Q9KVN0"/>
<dbReference type="STRING" id="243277.VC_0111"/>
<dbReference type="DNASU" id="2614107"/>
<dbReference type="EnsemblBacteria" id="AAF93289">
    <property type="protein sequence ID" value="AAF93289"/>
    <property type="gene ID" value="VC_0111"/>
</dbReference>
<dbReference type="KEGG" id="vch:VC_0111"/>
<dbReference type="PATRIC" id="fig|243277.26.peg.102"/>
<dbReference type="eggNOG" id="COG0218">
    <property type="taxonomic scope" value="Bacteria"/>
</dbReference>
<dbReference type="HOGENOM" id="CLU_033732_1_2_6"/>
<dbReference type="Proteomes" id="UP000000584">
    <property type="component" value="Chromosome 1"/>
</dbReference>
<dbReference type="GO" id="GO:0005829">
    <property type="term" value="C:cytosol"/>
    <property type="evidence" value="ECO:0000318"/>
    <property type="project" value="GO_Central"/>
</dbReference>
<dbReference type="GO" id="GO:0005525">
    <property type="term" value="F:GTP binding"/>
    <property type="evidence" value="ECO:0007669"/>
    <property type="project" value="UniProtKB-UniRule"/>
</dbReference>
<dbReference type="GO" id="GO:0046872">
    <property type="term" value="F:metal ion binding"/>
    <property type="evidence" value="ECO:0007669"/>
    <property type="project" value="UniProtKB-KW"/>
</dbReference>
<dbReference type="GO" id="GO:0000917">
    <property type="term" value="P:division septum assembly"/>
    <property type="evidence" value="ECO:0007669"/>
    <property type="project" value="UniProtKB-KW"/>
</dbReference>
<dbReference type="CDD" id="cd01876">
    <property type="entry name" value="YihA_EngB"/>
    <property type="match status" value="1"/>
</dbReference>
<dbReference type="FunFam" id="3.40.50.300:FF:000098">
    <property type="entry name" value="Probable GTP-binding protein EngB"/>
    <property type="match status" value="1"/>
</dbReference>
<dbReference type="Gene3D" id="3.40.50.300">
    <property type="entry name" value="P-loop containing nucleotide triphosphate hydrolases"/>
    <property type="match status" value="1"/>
</dbReference>
<dbReference type="HAMAP" id="MF_00321">
    <property type="entry name" value="GTPase_EngB"/>
    <property type="match status" value="1"/>
</dbReference>
<dbReference type="InterPro" id="IPR030393">
    <property type="entry name" value="G_ENGB_dom"/>
</dbReference>
<dbReference type="InterPro" id="IPR006073">
    <property type="entry name" value="GTP-bd"/>
</dbReference>
<dbReference type="InterPro" id="IPR019987">
    <property type="entry name" value="GTP-bd_ribosome_bio_YsxC"/>
</dbReference>
<dbReference type="InterPro" id="IPR027417">
    <property type="entry name" value="P-loop_NTPase"/>
</dbReference>
<dbReference type="NCBIfam" id="TIGR03598">
    <property type="entry name" value="GTPase_YsxC"/>
    <property type="match status" value="1"/>
</dbReference>
<dbReference type="PANTHER" id="PTHR11649:SF13">
    <property type="entry name" value="ENGB-TYPE G DOMAIN-CONTAINING PROTEIN"/>
    <property type="match status" value="1"/>
</dbReference>
<dbReference type="PANTHER" id="PTHR11649">
    <property type="entry name" value="MSS1/TRME-RELATED GTP-BINDING PROTEIN"/>
    <property type="match status" value="1"/>
</dbReference>
<dbReference type="Pfam" id="PF01926">
    <property type="entry name" value="MMR_HSR1"/>
    <property type="match status" value="1"/>
</dbReference>
<dbReference type="SUPFAM" id="SSF52540">
    <property type="entry name" value="P-loop containing nucleoside triphosphate hydrolases"/>
    <property type="match status" value="1"/>
</dbReference>
<dbReference type="PROSITE" id="PS51706">
    <property type="entry name" value="G_ENGB"/>
    <property type="match status" value="1"/>
</dbReference>
<organism>
    <name type="scientific">Vibrio cholerae serotype O1 (strain ATCC 39315 / El Tor Inaba N16961)</name>
    <dbReference type="NCBI Taxonomy" id="243277"/>
    <lineage>
        <taxon>Bacteria</taxon>
        <taxon>Pseudomonadati</taxon>
        <taxon>Pseudomonadota</taxon>
        <taxon>Gammaproteobacteria</taxon>
        <taxon>Vibrionales</taxon>
        <taxon>Vibrionaceae</taxon>
        <taxon>Vibrio</taxon>
    </lineage>
</organism>
<keyword id="KW-0131">Cell cycle</keyword>
<keyword id="KW-0132">Cell division</keyword>
<keyword id="KW-0342">GTP-binding</keyword>
<keyword id="KW-0460">Magnesium</keyword>
<keyword id="KW-0479">Metal-binding</keyword>
<keyword id="KW-0547">Nucleotide-binding</keyword>
<keyword id="KW-1185">Reference proteome</keyword>
<keyword id="KW-0717">Septation</keyword>
<sequence>MSVKIHYQNTHFITSAPDIRHLPEDEGIEIAFAGRSNAGKSSSLNRLTNQKNLAKTSKTPGRTQLINLFKVADGCHIVDLPGYGFAQVPLEMKLKWQRALGEYLQKRQSLKGLVVLMDIRHPMKDLDQQLIIWAVECGIPVQVMLTKADKLKSGARKAQVLKVREEAKTFGGDVAVDAFSSLSGIGVDTLRAKLDEWYAPMLAALAEQEEGEQPESSTDQ</sequence>